<accession>B5F352</accession>
<feature type="chain" id="PRO_1000114360" description="Protein RecA">
    <location>
        <begin position="1"/>
        <end position="353"/>
    </location>
</feature>
<feature type="binding site" evidence="1">
    <location>
        <begin position="67"/>
        <end position="74"/>
    </location>
    <ligand>
        <name>ATP</name>
        <dbReference type="ChEBI" id="CHEBI:30616"/>
    </ligand>
</feature>
<evidence type="ECO:0000255" key="1">
    <source>
        <dbReference type="HAMAP-Rule" id="MF_00268"/>
    </source>
</evidence>
<proteinExistence type="inferred from homology"/>
<gene>
    <name evidence="1" type="primary">recA</name>
    <name type="ordered locus">SeAg_B2948</name>
</gene>
<protein>
    <recommendedName>
        <fullName evidence="1">Protein RecA</fullName>
    </recommendedName>
    <alternativeName>
        <fullName evidence="1">Recombinase A</fullName>
    </alternativeName>
</protein>
<dbReference type="EMBL" id="CP001138">
    <property type="protein sequence ID" value="ACH51728.1"/>
    <property type="molecule type" value="Genomic_DNA"/>
</dbReference>
<dbReference type="RefSeq" id="WP_000963150.1">
    <property type="nucleotide sequence ID" value="NC_011149.1"/>
</dbReference>
<dbReference type="SMR" id="B5F352"/>
<dbReference type="KEGG" id="sea:SeAg_B2948"/>
<dbReference type="HOGENOM" id="CLU_040469_3_2_6"/>
<dbReference type="Proteomes" id="UP000008819">
    <property type="component" value="Chromosome"/>
</dbReference>
<dbReference type="GO" id="GO:0005829">
    <property type="term" value="C:cytosol"/>
    <property type="evidence" value="ECO:0007669"/>
    <property type="project" value="TreeGrafter"/>
</dbReference>
<dbReference type="GO" id="GO:0005524">
    <property type="term" value="F:ATP binding"/>
    <property type="evidence" value="ECO:0007669"/>
    <property type="project" value="UniProtKB-UniRule"/>
</dbReference>
<dbReference type="GO" id="GO:0016887">
    <property type="term" value="F:ATP hydrolysis activity"/>
    <property type="evidence" value="ECO:0007669"/>
    <property type="project" value="InterPro"/>
</dbReference>
<dbReference type="GO" id="GO:0140664">
    <property type="term" value="F:ATP-dependent DNA damage sensor activity"/>
    <property type="evidence" value="ECO:0007669"/>
    <property type="project" value="InterPro"/>
</dbReference>
<dbReference type="GO" id="GO:0003684">
    <property type="term" value="F:damaged DNA binding"/>
    <property type="evidence" value="ECO:0007669"/>
    <property type="project" value="UniProtKB-UniRule"/>
</dbReference>
<dbReference type="GO" id="GO:0003697">
    <property type="term" value="F:single-stranded DNA binding"/>
    <property type="evidence" value="ECO:0007669"/>
    <property type="project" value="UniProtKB-UniRule"/>
</dbReference>
<dbReference type="GO" id="GO:0006310">
    <property type="term" value="P:DNA recombination"/>
    <property type="evidence" value="ECO:0007669"/>
    <property type="project" value="UniProtKB-UniRule"/>
</dbReference>
<dbReference type="GO" id="GO:0006281">
    <property type="term" value="P:DNA repair"/>
    <property type="evidence" value="ECO:0007669"/>
    <property type="project" value="UniProtKB-UniRule"/>
</dbReference>
<dbReference type="GO" id="GO:0009432">
    <property type="term" value="P:SOS response"/>
    <property type="evidence" value="ECO:0007669"/>
    <property type="project" value="UniProtKB-UniRule"/>
</dbReference>
<dbReference type="CDD" id="cd00983">
    <property type="entry name" value="RecA"/>
    <property type="match status" value="1"/>
</dbReference>
<dbReference type="FunFam" id="3.40.50.300:FF:000087">
    <property type="entry name" value="Recombinase RecA"/>
    <property type="match status" value="1"/>
</dbReference>
<dbReference type="Gene3D" id="3.40.50.300">
    <property type="entry name" value="P-loop containing nucleotide triphosphate hydrolases"/>
    <property type="match status" value="1"/>
</dbReference>
<dbReference type="HAMAP" id="MF_00268">
    <property type="entry name" value="RecA"/>
    <property type="match status" value="1"/>
</dbReference>
<dbReference type="InterPro" id="IPR003593">
    <property type="entry name" value="AAA+_ATPase"/>
</dbReference>
<dbReference type="InterPro" id="IPR013765">
    <property type="entry name" value="DNA_recomb/repair_RecA"/>
</dbReference>
<dbReference type="InterPro" id="IPR020584">
    <property type="entry name" value="DNA_recomb/repair_RecA_CS"/>
</dbReference>
<dbReference type="InterPro" id="IPR027417">
    <property type="entry name" value="P-loop_NTPase"/>
</dbReference>
<dbReference type="InterPro" id="IPR049261">
    <property type="entry name" value="RecA-like_C"/>
</dbReference>
<dbReference type="InterPro" id="IPR049428">
    <property type="entry name" value="RecA-like_N"/>
</dbReference>
<dbReference type="InterPro" id="IPR020588">
    <property type="entry name" value="RecA_ATP-bd"/>
</dbReference>
<dbReference type="InterPro" id="IPR023400">
    <property type="entry name" value="RecA_C_sf"/>
</dbReference>
<dbReference type="InterPro" id="IPR020587">
    <property type="entry name" value="RecA_monomer-monomer_interface"/>
</dbReference>
<dbReference type="NCBIfam" id="TIGR02012">
    <property type="entry name" value="tigrfam_recA"/>
    <property type="match status" value="1"/>
</dbReference>
<dbReference type="PANTHER" id="PTHR45900:SF1">
    <property type="entry name" value="MITOCHONDRIAL DNA REPAIR PROTEIN RECA HOMOLOG-RELATED"/>
    <property type="match status" value="1"/>
</dbReference>
<dbReference type="PANTHER" id="PTHR45900">
    <property type="entry name" value="RECA"/>
    <property type="match status" value="1"/>
</dbReference>
<dbReference type="Pfam" id="PF00154">
    <property type="entry name" value="RecA"/>
    <property type="match status" value="1"/>
</dbReference>
<dbReference type="Pfam" id="PF21096">
    <property type="entry name" value="RecA_C"/>
    <property type="match status" value="1"/>
</dbReference>
<dbReference type="PRINTS" id="PR00142">
    <property type="entry name" value="RECA"/>
</dbReference>
<dbReference type="SMART" id="SM00382">
    <property type="entry name" value="AAA"/>
    <property type="match status" value="1"/>
</dbReference>
<dbReference type="SUPFAM" id="SSF52540">
    <property type="entry name" value="P-loop containing nucleoside triphosphate hydrolases"/>
    <property type="match status" value="1"/>
</dbReference>
<dbReference type="SUPFAM" id="SSF54752">
    <property type="entry name" value="RecA protein, C-terminal domain"/>
    <property type="match status" value="1"/>
</dbReference>
<dbReference type="PROSITE" id="PS00321">
    <property type="entry name" value="RECA_1"/>
    <property type="match status" value="1"/>
</dbReference>
<dbReference type="PROSITE" id="PS50162">
    <property type="entry name" value="RECA_2"/>
    <property type="match status" value="1"/>
</dbReference>
<dbReference type="PROSITE" id="PS50163">
    <property type="entry name" value="RECA_3"/>
    <property type="match status" value="1"/>
</dbReference>
<organism>
    <name type="scientific">Salmonella agona (strain SL483)</name>
    <dbReference type="NCBI Taxonomy" id="454166"/>
    <lineage>
        <taxon>Bacteria</taxon>
        <taxon>Pseudomonadati</taxon>
        <taxon>Pseudomonadota</taxon>
        <taxon>Gammaproteobacteria</taxon>
        <taxon>Enterobacterales</taxon>
        <taxon>Enterobacteriaceae</taxon>
        <taxon>Salmonella</taxon>
    </lineage>
</organism>
<comment type="function">
    <text evidence="1">Can catalyze the hydrolysis of ATP in the presence of single-stranded DNA, the ATP-dependent uptake of single-stranded DNA by duplex DNA, and the ATP-dependent hybridization of homologous single-stranded DNAs. It interacts with LexA causing its activation and leading to its autocatalytic cleavage.</text>
</comment>
<comment type="subcellular location">
    <subcellularLocation>
        <location evidence="1">Cytoplasm</location>
    </subcellularLocation>
</comment>
<comment type="similarity">
    <text evidence="1">Belongs to the RecA family.</text>
</comment>
<reference key="1">
    <citation type="journal article" date="2011" name="J. Bacteriol.">
        <title>Comparative genomics of 28 Salmonella enterica isolates: evidence for CRISPR-mediated adaptive sublineage evolution.</title>
        <authorList>
            <person name="Fricke W.F."/>
            <person name="Mammel M.K."/>
            <person name="McDermott P.F."/>
            <person name="Tartera C."/>
            <person name="White D.G."/>
            <person name="Leclerc J.E."/>
            <person name="Ravel J."/>
            <person name="Cebula T.A."/>
        </authorList>
    </citation>
    <scope>NUCLEOTIDE SEQUENCE [LARGE SCALE GENOMIC DNA]</scope>
    <source>
        <strain>SL483</strain>
    </source>
</reference>
<sequence length="353" mass="37944">MAIDENKQKALAAALGQIEKQFGKGSIMRLGEDRSMDVETISTGSLSLDIALGAGGLPMGRIVEIYGPESSGKTTLTLQVIAAAQREGKTCAFIDAEHALDPVYARKLGVDIDNLLCSQPDTGEQALEICDALARSGAVDVIVVDSVAALTPKAEIEGEIGDSHMGLAARMMSQAMRKLAGNLKQSNTLLIFINQIRMKIGVMFGNPETTTGGNALKFYASVRLDIRRIGAVKEGDNVVGSETRVKVVKNKIAAPFKQAEFQILYGEGINFYGELVDLGVKEKLIEKAGAWYSYNGEKIGQGKANATTWLKENPATAKEIEKRVRELLLSNQNATPDFAVDDSEGVAETNEDF</sequence>
<keyword id="KW-0067">ATP-binding</keyword>
<keyword id="KW-0963">Cytoplasm</keyword>
<keyword id="KW-0227">DNA damage</keyword>
<keyword id="KW-0233">DNA recombination</keyword>
<keyword id="KW-0234">DNA repair</keyword>
<keyword id="KW-0238">DNA-binding</keyword>
<keyword id="KW-0547">Nucleotide-binding</keyword>
<keyword id="KW-0742">SOS response</keyword>
<name>RECA_SALA4</name>